<protein>
    <recommendedName>
        <fullName>Uncharacterized protein YGR017W</fullName>
    </recommendedName>
</protein>
<name>YG1B_YEAST</name>
<proteinExistence type="evidence at protein level"/>
<evidence type="ECO:0000256" key="1">
    <source>
        <dbReference type="SAM" id="MobiDB-lite"/>
    </source>
</evidence>
<evidence type="ECO:0000269" key="2">
    <source>
    </source>
</evidence>
<evidence type="ECO:0000305" key="3"/>
<accession>P53210</accession>
<accession>D6VUF3</accession>
<keyword id="KW-1185">Reference proteome</keyword>
<sequence>MSHQMAPWIPMFIQSCKNNTEPFVSFQFATVDELTNKPRCRTVVFRDFLFHDKRTNVLTFNTDMRSSKITESFITPNSNNSSDSKRCETPFFEACFYFPETWEQYRFSGQCFTISKQFKKIPAEIVTKYDIFSPRFSETNDDSTDEEIDTPINDDDDDDKNNDADNNDINEDNKLIESIENDEHHEDEDDYYPQPQEWEAELLRQWSSLSRHTKSLYRKPAPGQKLTSETSKQLDKLHRGVDGAKEDAGLENFGIVCLCVDSVDFLNLKEGRGGERWIFQKTDGKDEDLWEEQEVCP</sequence>
<reference key="1">
    <citation type="journal article" date="1997" name="Yeast">
        <title>Sequence analysis of 203 kilobases from Saccharomyces cerevisiae chromosome VII.</title>
        <authorList>
            <person name="Rieger M."/>
            <person name="Brueckner M."/>
            <person name="Schaefer M."/>
            <person name="Mueller-Auer S."/>
        </authorList>
    </citation>
    <scope>NUCLEOTIDE SEQUENCE [GENOMIC DNA]</scope>
    <source>
        <strain>ATCC 204508 / S288c</strain>
    </source>
</reference>
<reference key="2">
    <citation type="journal article" date="1997" name="Nature">
        <title>The nucleotide sequence of Saccharomyces cerevisiae chromosome VII.</title>
        <authorList>
            <person name="Tettelin H."/>
            <person name="Agostoni-Carbone M.L."/>
            <person name="Albermann K."/>
            <person name="Albers M."/>
            <person name="Arroyo J."/>
            <person name="Backes U."/>
            <person name="Barreiros T."/>
            <person name="Bertani I."/>
            <person name="Bjourson A.J."/>
            <person name="Brueckner M."/>
            <person name="Bruschi C.V."/>
            <person name="Carignani G."/>
            <person name="Castagnoli L."/>
            <person name="Cerdan E."/>
            <person name="Clemente M.L."/>
            <person name="Coblenz A."/>
            <person name="Coglievina M."/>
            <person name="Coissac E."/>
            <person name="Defoor E."/>
            <person name="Del Bino S."/>
            <person name="Delius H."/>
            <person name="Delneri D."/>
            <person name="de Wergifosse P."/>
            <person name="Dujon B."/>
            <person name="Durand P."/>
            <person name="Entian K.-D."/>
            <person name="Eraso P."/>
            <person name="Escribano V."/>
            <person name="Fabiani L."/>
            <person name="Fartmann B."/>
            <person name="Feroli F."/>
            <person name="Feuermann M."/>
            <person name="Frontali L."/>
            <person name="Garcia-Gonzalez M."/>
            <person name="Garcia-Saez M.I."/>
            <person name="Goffeau A."/>
            <person name="Guerreiro P."/>
            <person name="Hani J."/>
            <person name="Hansen M."/>
            <person name="Hebling U."/>
            <person name="Hernandez K."/>
            <person name="Heumann K."/>
            <person name="Hilger F."/>
            <person name="Hofmann B."/>
            <person name="Indge K.J."/>
            <person name="James C.M."/>
            <person name="Klima R."/>
            <person name="Koetter P."/>
            <person name="Kramer B."/>
            <person name="Kramer W."/>
            <person name="Lauquin G."/>
            <person name="Leuther H."/>
            <person name="Louis E.J."/>
            <person name="Maillier E."/>
            <person name="Marconi A."/>
            <person name="Martegani E."/>
            <person name="Mazon M.J."/>
            <person name="Mazzoni C."/>
            <person name="McReynolds A.D.K."/>
            <person name="Melchioretto P."/>
            <person name="Mewes H.-W."/>
            <person name="Minenkova O."/>
            <person name="Mueller-Auer S."/>
            <person name="Nawrocki A."/>
            <person name="Netter P."/>
            <person name="Neu R."/>
            <person name="Nombela C."/>
            <person name="Oliver S.G."/>
            <person name="Panzeri L."/>
            <person name="Paoluzi S."/>
            <person name="Plevani P."/>
            <person name="Portetelle D."/>
            <person name="Portillo F."/>
            <person name="Potier S."/>
            <person name="Purnelle B."/>
            <person name="Rieger M."/>
            <person name="Riles L."/>
            <person name="Rinaldi T."/>
            <person name="Robben J."/>
            <person name="Rodrigues-Pousada C."/>
            <person name="Rodriguez-Belmonte E."/>
            <person name="Rodriguez-Torres A.M."/>
            <person name="Rose M."/>
            <person name="Ruzzi M."/>
            <person name="Saliola M."/>
            <person name="Sanchez-Perez M."/>
            <person name="Schaefer B."/>
            <person name="Schaefer M."/>
            <person name="Scharfe M."/>
            <person name="Schmidheini T."/>
            <person name="Schreer A."/>
            <person name="Skala J."/>
            <person name="Souciet J.-L."/>
            <person name="Steensma H.Y."/>
            <person name="Talla E."/>
            <person name="Thierry A."/>
            <person name="Vandenbol M."/>
            <person name="van der Aart Q.J.M."/>
            <person name="Van Dyck L."/>
            <person name="Vanoni M."/>
            <person name="Verhasselt P."/>
            <person name="Voet M."/>
            <person name="Volckaert G."/>
            <person name="Wambutt R."/>
            <person name="Watson M.D."/>
            <person name="Weber N."/>
            <person name="Wedler E."/>
            <person name="Wedler H."/>
            <person name="Wipfli P."/>
            <person name="Wolf K."/>
            <person name="Wright L.F."/>
            <person name="Zaccaria P."/>
            <person name="Zimmermann M."/>
            <person name="Zollner A."/>
            <person name="Kleine K."/>
        </authorList>
    </citation>
    <scope>NUCLEOTIDE SEQUENCE [LARGE SCALE GENOMIC DNA]</scope>
    <source>
        <strain>ATCC 204508 / S288c</strain>
    </source>
</reference>
<reference key="3">
    <citation type="journal article" date="2014" name="G3 (Bethesda)">
        <title>The reference genome sequence of Saccharomyces cerevisiae: Then and now.</title>
        <authorList>
            <person name="Engel S.R."/>
            <person name="Dietrich F.S."/>
            <person name="Fisk D.G."/>
            <person name="Binkley G."/>
            <person name="Balakrishnan R."/>
            <person name="Costanzo M.C."/>
            <person name="Dwight S.S."/>
            <person name="Hitz B.C."/>
            <person name="Karra K."/>
            <person name="Nash R.S."/>
            <person name="Weng S."/>
            <person name="Wong E.D."/>
            <person name="Lloyd P."/>
            <person name="Skrzypek M.S."/>
            <person name="Miyasato S.R."/>
            <person name="Simison M."/>
            <person name="Cherry J.M."/>
        </authorList>
    </citation>
    <scope>GENOME REANNOTATION</scope>
    <source>
        <strain>ATCC 204508 / S288c</strain>
    </source>
</reference>
<reference key="4">
    <citation type="journal article" date="2003" name="Nature">
        <title>Global analysis of protein expression in yeast.</title>
        <authorList>
            <person name="Ghaemmaghami S."/>
            <person name="Huh W.-K."/>
            <person name="Bower K."/>
            <person name="Howson R.W."/>
            <person name="Belle A."/>
            <person name="Dephoure N."/>
            <person name="O'Shea E.K."/>
            <person name="Weissman J.S."/>
        </authorList>
    </citation>
    <scope>LEVEL OF PROTEIN EXPRESSION [LARGE SCALE ANALYSIS]</scope>
</reference>
<reference key="5">
    <citation type="journal article" date="2009" name="Science">
        <title>Global analysis of Cdk1 substrate phosphorylation sites provides insights into evolution.</title>
        <authorList>
            <person name="Holt L.J."/>
            <person name="Tuch B.B."/>
            <person name="Villen J."/>
            <person name="Johnson A.D."/>
            <person name="Gygi S.P."/>
            <person name="Morgan D.O."/>
        </authorList>
    </citation>
    <scope>IDENTIFICATION BY MASS SPECTROMETRY [LARGE SCALE ANALYSIS]</scope>
</reference>
<organism>
    <name type="scientific">Saccharomyces cerevisiae (strain ATCC 204508 / S288c)</name>
    <name type="common">Baker's yeast</name>
    <dbReference type="NCBI Taxonomy" id="559292"/>
    <lineage>
        <taxon>Eukaryota</taxon>
        <taxon>Fungi</taxon>
        <taxon>Dikarya</taxon>
        <taxon>Ascomycota</taxon>
        <taxon>Saccharomycotina</taxon>
        <taxon>Saccharomycetes</taxon>
        <taxon>Saccharomycetales</taxon>
        <taxon>Saccharomycetaceae</taxon>
        <taxon>Saccharomyces</taxon>
    </lineage>
</organism>
<dbReference type="EMBL" id="Z72802">
    <property type="protein sequence ID" value="CAA97000.1"/>
    <property type="molecule type" value="Genomic_DNA"/>
</dbReference>
<dbReference type="EMBL" id="BK006941">
    <property type="protein sequence ID" value="DAA08114.1"/>
    <property type="molecule type" value="Genomic_DNA"/>
</dbReference>
<dbReference type="PIR" id="S64308">
    <property type="entry name" value="S64308"/>
</dbReference>
<dbReference type="RefSeq" id="NP_011531.1">
    <property type="nucleotide sequence ID" value="NM_001181146.1"/>
</dbReference>
<dbReference type="SMR" id="P53210"/>
<dbReference type="BioGRID" id="33260">
    <property type="interactions" value="78"/>
</dbReference>
<dbReference type="DIP" id="DIP-1860N"/>
<dbReference type="FunCoup" id="P53210">
    <property type="interactions" value="211"/>
</dbReference>
<dbReference type="IntAct" id="P53210">
    <property type="interactions" value="6"/>
</dbReference>
<dbReference type="MINT" id="P53210"/>
<dbReference type="STRING" id="4932.YGR017W"/>
<dbReference type="iPTMnet" id="P53210"/>
<dbReference type="PaxDb" id="4932-YGR017W"/>
<dbReference type="PeptideAtlas" id="P53210"/>
<dbReference type="EnsemblFungi" id="YGR017W_mRNA">
    <property type="protein sequence ID" value="YGR017W"/>
    <property type="gene ID" value="YGR017W"/>
</dbReference>
<dbReference type="GeneID" id="852900"/>
<dbReference type="KEGG" id="sce:YGR017W"/>
<dbReference type="AGR" id="SGD:S000003249"/>
<dbReference type="SGD" id="S000003249">
    <property type="gene designation" value="YGR017W"/>
</dbReference>
<dbReference type="VEuPathDB" id="FungiDB:YGR017W"/>
<dbReference type="eggNOG" id="KOG4558">
    <property type="taxonomic scope" value="Eukaryota"/>
</dbReference>
<dbReference type="HOGENOM" id="CLU_058669_1_0_1"/>
<dbReference type="InParanoid" id="P53210"/>
<dbReference type="OMA" id="IHQMAPW"/>
<dbReference type="OrthoDB" id="5394411at2759"/>
<dbReference type="BioCyc" id="YEAST:G3O-30744-MONOMER"/>
<dbReference type="BioGRID-ORCS" id="852900">
    <property type="hits" value="0 hits in 10 CRISPR screens"/>
</dbReference>
<dbReference type="PRO" id="PR:P53210"/>
<dbReference type="Proteomes" id="UP000002311">
    <property type="component" value="Chromosome VII"/>
</dbReference>
<dbReference type="RNAct" id="P53210">
    <property type="molecule type" value="protein"/>
</dbReference>
<dbReference type="GO" id="GO:0005737">
    <property type="term" value="C:cytoplasm"/>
    <property type="evidence" value="ECO:0007005"/>
    <property type="project" value="SGD"/>
</dbReference>
<dbReference type="GO" id="GO:0005634">
    <property type="term" value="C:nucleus"/>
    <property type="evidence" value="ECO:0007005"/>
    <property type="project" value="SGD"/>
</dbReference>
<dbReference type="GO" id="GO:0010181">
    <property type="term" value="F:FMN binding"/>
    <property type="evidence" value="ECO:0007669"/>
    <property type="project" value="InterPro"/>
</dbReference>
<dbReference type="GO" id="GO:0004733">
    <property type="term" value="F:pyridoxamine phosphate oxidase activity"/>
    <property type="evidence" value="ECO:0000318"/>
    <property type="project" value="GO_Central"/>
</dbReference>
<dbReference type="Gene3D" id="2.30.110.10">
    <property type="entry name" value="Electron Transport, Fmn-binding Protein, Chain A"/>
    <property type="match status" value="1"/>
</dbReference>
<dbReference type="InterPro" id="IPR024624">
    <property type="entry name" value="Pyridox_Oxase_Alr4036_FMN-bd"/>
</dbReference>
<dbReference type="InterPro" id="IPR012349">
    <property type="entry name" value="Split_barrel_FMN-bd"/>
</dbReference>
<dbReference type="PANTHER" id="PTHR28243">
    <property type="entry name" value="AGL049CP"/>
    <property type="match status" value="1"/>
</dbReference>
<dbReference type="PANTHER" id="PTHR28243:SF1">
    <property type="entry name" value="PYRIDOXAMINE 5'-PHOSPHATE OXIDASE ALR4036 FAMILY FMN-BINDING DOMAIN-CONTAINING PROTEIN"/>
    <property type="match status" value="1"/>
</dbReference>
<dbReference type="Pfam" id="PF12766">
    <property type="entry name" value="Pyridox_oxase_2"/>
    <property type="match status" value="1"/>
</dbReference>
<dbReference type="SUPFAM" id="SSF50475">
    <property type="entry name" value="FMN-binding split barrel"/>
    <property type="match status" value="1"/>
</dbReference>
<gene>
    <name type="ordered locus">YGR017W</name>
</gene>
<comment type="miscellaneous">
    <text evidence="2">Present with 2840 molecules/cell in log phase SD medium.</text>
</comment>
<comment type="similarity">
    <text evidence="3">To S.pombe SpBC725.03.</text>
</comment>
<feature type="chain" id="PRO_0000202784" description="Uncharacterized protein YGR017W">
    <location>
        <begin position="1"/>
        <end position="297"/>
    </location>
</feature>
<feature type="region of interest" description="Disordered" evidence="1">
    <location>
        <begin position="136"/>
        <end position="174"/>
    </location>
</feature>
<feature type="compositionally biased region" description="Acidic residues" evidence="1">
    <location>
        <begin position="139"/>
        <end position="170"/>
    </location>
</feature>